<sequence>MFNYSGLNEECGVFGIWNHPEAAQLTYMGLHSLQHRGQEGAGIVVSDQNELKGERGLGLLTEAIKDDQMERLKGYQHAIGHVRYATSGNKGIENIQPLLYHFYDMSVGICHNGNLINAKSLRQNLEKQGAIFHSSSDTEVIMHLIRRSKAPTFEEALKESLRKIKGGFTFAILTKDALYGAVDPNAIRPLVVGKMKDGTYILASETCAIDVLGAEFVQDIHAGEYVVINDKGITVKSYTHHTTTAISAMEYIYFARPDSTIAGKNVHAVRKASGKMLAQESPVKADMVIGVPNSSLSAASGYAEEIGLPYEMGLVKNQYVARTFIQPTQELREQGVRVKLSAVKDIVDGKNIILVDDSIVRGTTIRRIVKMLKDSGANKVHVRIASPEFMFPSFYGIDVSTTAELISASKSPEEIKDYIGADSLAYLSVDGLIESIGLDYDAPYSGLCVESFTGDYPAGLYDYEANYKAHLSHRQKQYISKNKHYFDSEGNLNV</sequence>
<accession>Q6GI14</accession>
<comment type="function">
    <text evidence="2">Catalyzes the formation of phosphoribosylamine from phosphoribosylpyrophosphate (PRPP) and glutamine.</text>
</comment>
<comment type="catalytic activity">
    <reaction evidence="2">
        <text>5-phospho-beta-D-ribosylamine + L-glutamate + diphosphate = 5-phospho-alpha-D-ribose 1-diphosphate + L-glutamine + H2O</text>
        <dbReference type="Rhea" id="RHEA:14905"/>
        <dbReference type="ChEBI" id="CHEBI:15377"/>
        <dbReference type="ChEBI" id="CHEBI:29985"/>
        <dbReference type="ChEBI" id="CHEBI:33019"/>
        <dbReference type="ChEBI" id="CHEBI:58017"/>
        <dbReference type="ChEBI" id="CHEBI:58359"/>
        <dbReference type="ChEBI" id="CHEBI:58681"/>
        <dbReference type="EC" id="2.4.2.14"/>
    </reaction>
</comment>
<comment type="cofactor">
    <cofactor evidence="2">
        <name>Mg(2+)</name>
        <dbReference type="ChEBI" id="CHEBI:18420"/>
    </cofactor>
    <text evidence="2">Binds 1 Mg(2+) ion per subunit.</text>
</comment>
<comment type="pathway">
    <text evidence="2">Purine metabolism; IMP biosynthesis via de novo pathway; N(1)-(5-phospho-D-ribosyl)glycinamide from 5-phospho-alpha-D-ribose 1-diphosphate: step 1/2.</text>
</comment>
<comment type="similarity">
    <text evidence="2">In the C-terminal section; belongs to the purine/pyrimidine phosphoribosyltransferase family.</text>
</comment>
<proteinExistence type="inferred from homology"/>
<dbReference type="EC" id="2.4.2.14" evidence="2"/>
<dbReference type="EMBL" id="BX571856">
    <property type="protein sequence ID" value="CAG40047.1"/>
    <property type="molecule type" value="Genomic_DNA"/>
</dbReference>
<dbReference type="RefSeq" id="WP_000483716.1">
    <property type="nucleotide sequence ID" value="NC_002952.2"/>
</dbReference>
<dbReference type="SMR" id="Q6GI14"/>
<dbReference type="MEROPS" id="C44.001"/>
<dbReference type="KEGG" id="sar:SAR1044"/>
<dbReference type="HOGENOM" id="CLU_022389_3_1_9"/>
<dbReference type="UniPathway" id="UPA00074">
    <property type="reaction ID" value="UER00124"/>
</dbReference>
<dbReference type="Proteomes" id="UP000000596">
    <property type="component" value="Chromosome"/>
</dbReference>
<dbReference type="GO" id="GO:0004044">
    <property type="term" value="F:amidophosphoribosyltransferase activity"/>
    <property type="evidence" value="ECO:0007669"/>
    <property type="project" value="UniProtKB-UniRule"/>
</dbReference>
<dbReference type="GO" id="GO:0000287">
    <property type="term" value="F:magnesium ion binding"/>
    <property type="evidence" value="ECO:0007669"/>
    <property type="project" value="UniProtKB-UniRule"/>
</dbReference>
<dbReference type="GO" id="GO:0006189">
    <property type="term" value="P:'de novo' IMP biosynthetic process"/>
    <property type="evidence" value="ECO:0007669"/>
    <property type="project" value="UniProtKB-UniRule"/>
</dbReference>
<dbReference type="GO" id="GO:0009113">
    <property type="term" value="P:purine nucleobase biosynthetic process"/>
    <property type="evidence" value="ECO:0007669"/>
    <property type="project" value="InterPro"/>
</dbReference>
<dbReference type="CDD" id="cd00715">
    <property type="entry name" value="GPATase_N"/>
    <property type="match status" value="1"/>
</dbReference>
<dbReference type="CDD" id="cd06223">
    <property type="entry name" value="PRTases_typeI"/>
    <property type="match status" value="1"/>
</dbReference>
<dbReference type="Gene3D" id="3.40.50.2020">
    <property type="match status" value="1"/>
</dbReference>
<dbReference type="Gene3D" id="3.60.20.10">
    <property type="entry name" value="Glutamine Phosphoribosylpyrophosphate, subunit 1, domain 1"/>
    <property type="match status" value="1"/>
</dbReference>
<dbReference type="HAMAP" id="MF_01931">
    <property type="entry name" value="PurF"/>
    <property type="match status" value="1"/>
</dbReference>
<dbReference type="InterPro" id="IPR017932">
    <property type="entry name" value="GATase_2_dom"/>
</dbReference>
<dbReference type="InterPro" id="IPR029055">
    <property type="entry name" value="Ntn_hydrolases_N"/>
</dbReference>
<dbReference type="InterPro" id="IPR000836">
    <property type="entry name" value="PRibTrfase_dom"/>
</dbReference>
<dbReference type="InterPro" id="IPR029057">
    <property type="entry name" value="PRTase-like"/>
</dbReference>
<dbReference type="InterPro" id="IPR005854">
    <property type="entry name" value="PurF"/>
</dbReference>
<dbReference type="InterPro" id="IPR035584">
    <property type="entry name" value="PurF_N"/>
</dbReference>
<dbReference type="NCBIfam" id="TIGR01134">
    <property type="entry name" value="purF"/>
    <property type="match status" value="1"/>
</dbReference>
<dbReference type="PANTHER" id="PTHR11907">
    <property type="entry name" value="AMIDOPHOSPHORIBOSYLTRANSFERASE"/>
    <property type="match status" value="1"/>
</dbReference>
<dbReference type="Pfam" id="PF13537">
    <property type="entry name" value="GATase_7"/>
    <property type="match status" value="1"/>
</dbReference>
<dbReference type="Pfam" id="PF00156">
    <property type="entry name" value="Pribosyltran"/>
    <property type="match status" value="1"/>
</dbReference>
<dbReference type="PIRSF" id="PIRSF000485">
    <property type="entry name" value="Amd_phspho_trans"/>
    <property type="match status" value="1"/>
</dbReference>
<dbReference type="SUPFAM" id="SSF56235">
    <property type="entry name" value="N-terminal nucleophile aminohydrolases (Ntn hydrolases)"/>
    <property type="match status" value="1"/>
</dbReference>
<dbReference type="SUPFAM" id="SSF53271">
    <property type="entry name" value="PRTase-like"/>
    <property type="match status" value="1"/>
</dbReference>
<dbReference type="PROSITE" id="PS51278">
    <property type="entry name" value="GATASE_TYPE_2"/>
    <property type="match status" value="1"/>
</dbReference>
<dbReference type="PROSITE" id="PS00103">
    <property type="entry name" value="PUR_PYR_PR_TRANSFER"/>
    <property type="match status" value="1"/>
</dbReference>
<evidence type="ECO:0000250" key="1"/>
<evidence type="ECO:0000255" key="2">
    <source>
        <dbReference type="HAMAP-Rule" id="MF_01931"/>
    </source>
</evidence>
<protein>
    <recommendedName>
        <fullName evidence="2">Amidophosphoribosyltransferase</fullName>
        <shortName evidence="2">ATase</shortName>
        <ecNumber evidence="2">2.4.2.14</ecNumber>
    </recommendedName>
    <alternativeName>
        <fullName evidence="2">Glutamine phosphoribosylpyrophosphate amidotransferase</fullName>
        <shortName evidence="2">GPATase</shortName>
    </alternativeName>
</protein>
<feature type="propeptide" id="PRO_0000045300" evidence="1">
    <location>
        <begin position="1"/>
        <end position="10"/>
    </location>
</feature>
<feature type="chain" id="PRO_0000045301" description="Amidophosphoribosyltransferase">
    <location>
        <begin position="11"/>
        <end position="494"/>
    </location>
</feature>
<feature type="domain" description="Glutamine amidotransferase type-2" evidence="2">
    <location>
        <begin position="11"/>
        <end position="231"/>
    </location>
</feature>
<feature type="active site" description="Nucleophile" evidence="2">
    <location>
        <position position="11"/>
    </location>
</feature>
<feature type="binding site" evidence="2">
    <location>
        <position position="294"/>
    </location>
    <ligand>
        <name>Mg(2+)</name>
        <dbReference type="ChEBI" id="CHEBI:18420"/>
    </ligand>
</feature>
<feature type="binding site" evidence="2">
    <location>
        <position position="356"/>
    </location>
    <ligand>
        <name>Mg(2+)</name>
        <dbReference type="ChEBI" id="CHEBI:18420"/>
    </ligand>
</feature>
<feature type="binding site" evidence="2">
    <location>
        <position position="357"/>
    </location>
    <ligand>
        <name>Mg(2+)</name>
        <dbReference type="ChEBI" id="CHEBI:18420"/>
    </ligand>
</feature>
<reference key="1">
    <citation type="journal article" date="2004" name="Proc. Natl. Acad. Sci. U.S.A.">
        <title>Complete genomes of two clinical Staphylococcus aureus strains: evidence for the rapid evolution of virulence and drug resistance.</title>
        <authorList>
            <person name="Holden M.T.G."/>
            <person name="Feil E.J."/>
            <person name="Lindsay J.A."/>
            <person name="Peacock S.J."/>
            <person name="Day N.P.J."/>
            <person name="Enright M.C."/>
            <person name="Foster T.J."/>
            <person name="Moore C.E."/>
            <person name="Hurst L."/>
            <person name="Atkin R."/>
            <person name="Barron A."/>
            <person name="Bason N."/>
            <person name="Bentley S.D."/>
            <person name="Chillingworth C."/>
            <person name="Chillingworth T."/>
            <person name="Churcher C."/>
            <person name="Clark L."/>
            <person name="Corton C."/>
            <person name="Cronin A."/>
            <person name="Doggett J."/>
            <person name="Dowd L."/>
            <person name="Feltwell T."/>
            <person name="Hance Z."/>
            <person name="Harris B."/>
            <person name="Hauser H."/>
            <person name="Holroyd S."/>
            <person name="Jagels K."/>
            <person name="James K.D."/>
            <person name="Lennard N."/>
            <person name="Line A."/>
            <person name="Mayes R."/>
            <person name="Moule S."/>
            <person name="Mungall K."/>
            <person name="Ormond D."/>
            <person name="Quail M.A."/>
            <person name="Rabbinowitsch E."/>
            <person name="Rutherford K.M."/>
            <person name="Sanders M."/>
            <person name="Sharp S."/>
            <person name="Simmonds M."/>
            <person name="Stevens K."/>
            <person name="Whitehead S."/>
            <person name="Barrell B.G."/>
            <person name="Spratt B.G."/>
            <person name="Parkhill J."/>
        </authorList>
    </citation>
    <scope>NUCLEOTIDE SEQUENCE [LARGE SCALE GENOMIC DNA]</scope>
    <source>
        <strain>MRSA252</strain>
    </source>
</reference>
<gene>
    <name evidence="2" type="primary">purF</name>
    <name type="ordered locus">SAR1044</name>
</gene>
<keyword id="KW-0315">Glutamine amidotransferase</keyword>
<keyword id="KW-0328">Glycosyltransferase</keyword>
<keyword id="KW-0460">Magnesium</keyword>
<keyword id="KW-0479">Metal-binding</keyword>
<keyword id="KW-0658">Purine biosynthesis</keyword>
<keyword id="KW-0808">Transferase</keyword>
<organism>
    <name type="scientific">Staphylococcus aureus (strain MRSA252)</name>
    <dbReference type="NCBI Taxonomy" id="282458"/>
    <lineage>
        <taxon>Bacteria</taxon>
        <taxon>Bacillati</taxon>
        <taxon>Bacillota</taxon>
        <taxon>Bacilli</taxon>
        <taxon>Bacillales</taxon>
        <taxon>Staphylococcaceae</taxon>
        <taxon>Staphylococcus</taxon>
    </lineage>
</organism>
<name>PUR1_STAAR</name>